<dbReference type="EMBL" id="AF169387">
    <property type="protein sequence ID" value="AAD50449.1"/>
    <property type="molecule type" value="mRNA"/>
</dbReference>
<dbReference type="EMBL" id="AC123746">
    <property type="status" value="NOT_ANNOTATED_CDS"/>
    <property type="molecule type" value="Genomic_DNA"/>
</dbReference>
<dbReference type="EMBL" id="AC138214">
    <property type="status" value="NOT_ANNOTATED_CDS"/>
    <property type="molecule type" value="Genomic_DNA"/>
</dbReference>
<dbReference type="EMBL" id="Z35166">
    <property type="protein sequence ID" value="CAA84529.1"/>
    <property type="molecule type" value="mRNA"/>
</dbReference>
<dbReference type="EMBL" id="X82205">
    <property type="protein sequence ID" value="CAA57689.1"/>
    <property type="molecule type" value="mRNA"/>
</dbReference>
<dbReference type="EMBL" id="AK033387">
    <property type="protein sequence ID" value="BAC28260.1"/>
    <property type="molecule type" value="mRNA"/>
</dbReference>
<dbReference type="CCDS" id="CCDS35631.1"/>
<dbReference type="PIR" id="I48302">
    <property type="entry name" value="I48302"/>
</dbReference>
<dbReference type="PIR" id="S49488">
    <property type="entry name" value="S49488"/>
</dbReference>
<dbReference type="RefSeq" id="NP_031760.2">
    <property type="nucleotide sequence ID" value="NM_007734.3"/>
</dbReference>
<dbReference type="SMR" id="Q9QZS0"/>
<dbReference type="BioGRID" id="198818">
    <property type="interactions" value="4"/>
</dbReference>
<dbReference type="ComplexPortal" id="CPX-2961">
    <property type="entry name" value="Collagen type IV trimer variant 3"/>
</dbReference>
<dbReference type="FunCoup" id="Q9QZS0">
    <property type="interactions" value="456"/>
</dbReference>
<dbReference type="STRING" id="10090.ENSMUSP00000109084"/>
<dbReference type="GlyCosmos" id="Q9QZS0">
    <property type="glycosylation" value="2 sites, No reported glycans"/>
</dbReference>
<dbReference type="GlyGen" id="Q9QZS0">
    <property type="glycosylation" value="7 sites"/>
</dbReference>
<dbReference type="iPTMnet" id="Q9QZS0"/>
<dbReference type="PhosphoSitePlus" id="Q9QZS0"/>
<dbReference type="jPOST" id="Q9QZS0"/>
<dbReference type="PaxDb" id="10090-ENSMUSP00000109084"/>
<dbReference type="PeptideAtlas" id="Q9QZS0"/>
<dbReference type="ProteomicsDB" id="283474"/>
<dbReference type="Antibodypedia" id="34379">
    <property type="antibodies" value="285 antibodies from 31 providers"/>
</dbReference>
<dbReference type="DNASU" id="12828"/>
<dbReference type="Ensembl" id="ENSMUST00000113457.9">
    <property type="protein sequence ID" value="ENSMUSP00000109084.3"/>
    <property type="gene ID" value="ENSMUSG00000079465.9"/>
</dbReference>
<dbReference type="GeneID" id="12828"/>
<dbReference type="KEGG" id="mmu:12828"/>
<dbReference type="UCSC" id="uc007brv.1">
    <property type="organism name" value="mouse"/>
</dbReference>
<dbReference type="AGR" id="MGI:104688"/>
<dbReference type="CTD" id="1285"/>
<dbReference type="MGI" id="MGI:104688">
    <property type="gene designation" value="Col4a3"/>
</dbReference>
<dbReference type="VEuPathDB" id="HostDB:ENSMUSG00000079465"/>
<dbReference type="eggNOG" id="KOG3544">
    <property type="taxonomic scope" value="Eukaryota"/>
</dbReference>
<dbReference type="GeneTree" id="ENSGT00940000161675"/>
<dbReference type="HOGENOM" id="CLU_002023_0_0_1"/>
<dbReference type="InParanoid" id="Q9QZS0"/>
<dbReference type="OMA" id="KGPPGRC"/>
<dbReference type="OrthoDB" id="10071882at2759"/>
<dbReference type="PhylomeDB" id="Q9QZS0"/>
<dbReference type="TreeFam" id="TF316865"/>
<dbReference type="Reactome" id="R-MMU-1442490">
    <property type="pathway name" value="Collagen degradation"/>
</dbReference>
<dbReference type="Reactome" id="R-MMU-1474244">
    <property type="pathway name" value="Extracellular matrix organization"/>
</dbReference>
<dbReference type="Reactome" id="R-MMU-1650814">
    <property type="pathway name" value="Collagen biosynthesis and modifying enzymes"/>
</dbReference>
<dbReference type="Reactome" id="R-MMU-186797">
    <property type="pathway name" value="Signaling by PDGF"/>
</dbReference>
<dbReference type="Reactome" id="R-MMU-2022090">
    <property type="pathway name" value="Assembly of collagen fibrils and other multimeric structures"/>
</dbReference>
<dbReference type="Reactome" id="R-MMU-216083">
    <property type="pathway name" value="Integrin cell surface interactions"/>
</dbReference>
<dbReference type="Reactome" id="R-MMU-2243919">
    <property type="pathway name" value="Crosslinking of collagen fibrils"/>
</dbReference>
<dbReference type="Reactome" id="R-MMU-3000157">
    <property type="pathway name" value="Laminin interactions"/>
</dbReference>
<dbReference type="Reactome" id="R-MMU-3000171">
    <property type="pathway name" value="Non-integrin membrane-ECM interactions"/>
</dbReference>
<dbReference type="Reactome" id="R-MMU-419037">
    <property type="pathway name" value="NCAM1 interactions"/>
</dbReference>
<dbReference type="Reactome" id="R-MMU-8948216">
    <property type="pathway name" value="Collagen chain trimerization"/>
</dbReference>
<dbReference type="BioGRID-ORCS" id="12828">
    <property type="hits" value="2 hits in 75 CRISPR screens"/>
</dbReference>
<dbReference type="ChiTaRS" id="Col4a3">
    <property type="organism name" value="mouse"/>
</dbReference>
<dbReference type="PRO" id="PR:Q9QZS0"/>
<dbReference type="Proteomes" id="UP000000589">
    <property type="component" value="Chromosome 1"/>
</dbReference>
<dbReference type="RNAct" id="Q9QZS0">
    <property type="molecule type" value="protein"/>
</dbReference>
<dbReference type="Bgee" id="ENSMUSG00000079465">
    <property type="expression patterns" value="Expressed in epithelium of lens and 101 other cell types or tissues"/>
</dbReference>
<dbReference type="ExpressionAtlas" id="Q9QZS0">
    <property type="expression patterns" value="baseline and differential"/>
</dbReference>
<dbReference type="GO" id="GO:0005604">
    <property type="term" value="C:basement membrane"/>
    <property type="evidence" value="ECO:0000314"/>
    <property type="project" value="UniProtKB"/>
</dbReference>
<dbReference type="GO" id="GO:0005587">
    <property type="term" value="C:collagen type IV trimer"/>
    <property type="evidence" value="ECO:0000314"/>
    <property type="project" value="MGI"/>
</dbReference>
<dbReference type="GO" id="GO:0062023">
    <property type="term" value="C:collagen-containing extracellular matrix"/>
    <property type="evidence" value="ECO:0007005"/>
    <property type="project" value="BHF-UCL"/>
</dbReference>
<dbReference type="GO" id="GO:0005783">
    <property type="term" value="C:endoplasmic reticulum"/>
    <property type="evidence" value="ECO:0007669"/>
    <property type="project" value="Ensembl"/>
</dbReference>
<dbReference type="GO" id="GO:0005576">
    <property type="term" value="C:extracellular region"/>
    <property type="evidence" value="ECO:0007669"/>
    <property type="project" value="UniProtKB-KW"/>
</dbReference>
<dbReference type="GO" id="GO:0005201">
    <property type="term" value="F:extracellular matrix structural constituent"/>
    <property type="evidence" value="ECO:0007669"/>
    <property type="project" value="InterPro"/>
</dbReference>
<dbReference type="GO" id="GO:0005178">
    <property type="term" value="F:integrin binding"/>
    <property type="evidence" value="ECO:0000250"/>
    <property type="project" value="UniProtKB"/>
</dbReference>
<dbReference type="GO" id="GO:0007155">
    <property type="term" value="P:cell adhesion"/>
    <property type="evidence" value="ECO:0007669"/>
    <property type="project" value="UniProtKB-KW"/>
</dbReference>
<dbReference type="GO" id="GO:0007166">
    <property type="term" value="P:cell surface receptor signaling pathway"/>
    <property type="evidence" value="ECO:0000314"/>
    <property type="project" value="UniProtKB"/>
</dbReference>
<dbReference type="GO" id="GO:0038063">
    <property type="term" value="P:collagen-activated tyrosine kinase receptor signaling pathway"/>
    <property type="evidence" value="ECO:0000316"/>
    <property type="project" value="MGI"/>
</dbReference>
<dbReference type="GO" id="GO:0072577">
    <property type="term" value="P:endothelial cell apoptotic process"/>
    <property type="evidence" value="ECO:0000250"/>
    <property type="project" value="UniProtKB"/>
</dbReference>
<dbReference type="GO" id="GO:0032836">
    <property type="term" value="P:glomerular basement membrane development"/>
    <property type="evidence" value="ECO:0000315"/>
    <property type="project" value="UniProtKB"/>
</dbReference>
<dbReference type="GO" id="GO:0016525">
    <property type="term" value="P:negative regulation of angiogenesis"/>
    <property type="evidence" value="ECO:0000314"/>
    <property type="project" value="UniProtKB"/>
</dbReference>
<dbReference type="GO" id="GO:1905563">
    <property type="term" value="P:negative regulation of vascular endothelial cell proliferation"/>
    <property type="evidence" value="ECO:0000250"/>
    <property type="project" value="UniProtKB"/>
</dbReference>
<dbReference type="FunFam" id="2.170.240.10:FF:000001">
    <property type="entry name" value="Collagen IV alpha 1 chain"/>
    <property type="match status" value="1"/>
</dbReference>
<dbReference type="Gene3D" id="2.170.240.10">
    <property type="entry name" value="Collagen IV, non-collagenous"/>
    <property type="match status" value="1"/>
</dbReference>
<dbReference type="InterPro" id="IPR008160">
    <property type="entry name" value="Collagen"/>
</dbReference>
<dbReference type="InterPro" id="IPR001442">
    <property type="entry name" value="Collagen_IV_NC"/>
</dbReference>
<dbReference type="InterPro" id="IPR036954">
    <property type="entry name" value="Collagen_IV_NC_sf"/>
</dbReference>
<dbReference type="InterPro" id="IPR050149">
    <property type="entry name" value="Collagen_superfamily"/>
</dbReference>
<dbReference type="InterPro" id="IPR016187">
    <property type="entry name" value="CTDL_fold"/>
</dbReference>
<dbReference type="PANTHER" id="PTHR24023:SF1090">
    <property type="entry name" value="ALPHA2(IV)-LIKE COLLAGEN"/>
    <property type="match status" value="1"/>
</dbReference>
<dbReference type="PANTHER" id="PTHR24023">
    <property type="entry name" value="COLLAGEN ALPHA"/>
    <property type="match status" value="1"/>
</dbReference>
<dbReference type="Pfam" id="PF01413">
    <property type="entry name" value="C4"/>
    <property type="match status" value="2"/>
</dbReference>
<dbReference type="Pfam" id="PF01391">
    <property type="entry name" value="Collagen"/>
    <property type="match status" value="19"/>
</dbReference>
<dbReference type="SMART" id="SM00111">
    <property type="entry name" value="C4"/>
    <property type="match status" value="2"/>
</dbReference>
<dbReference type="SUPFAM" id="SSF56436">
    <property type="entry name" value="C-type lectin-like"/>
    <property type="match status" value="2"/>
</dbReference>
<dbReference type="PROSITE" id="PS51403">
    <property type="entry name" value="NC1_IV"/>
    <property type="match status" value="1"/>
</dbReference>
<gene>
    <name evidence="15" type="primary">Col4a3</name>
</gene>
<evidence type="ECO:0000250" key="1"/>
<evidence type="ECO:0000250" key="2">
    <source>
        <dbReference type="UniProtKB" id="Q01955"/>
    </source>
</evidence>
<evidence type="ECO:0000255" key="3"/>
<evidence type="ECO:0000255" key="4">
    <source>
        <dbReference type="PROSITE-ProRule" id="PRU00736"/>
    </source>
</evidence>
<evidence type="ECO:0000256" key="5">
    <source>
        <dbReference type="SAM" id="MobiDB-lite"/>
    </source>
</evidence>
<evidence type="ECO:0000269" key="6">
    <source>
    </source>
</evidence>
<evidence type="ECO:0000269" key="7">
    <source>
    </source>
</evidence>
<evidence type="ECO:0000269" key="8">
    <source>
    </source>
</evidence>
<evidence type="ECO:0000269" key="9">
    <source>
    </source>
</evidence>
<evidence type="ECO:0000305" key="10"/>
<evidence type="ECO:0000312" key="11">
    <source>
        <dbReference type="EMBL" id="AAD50449.1"/>
    </source>
</evidence>
<evidence type="ECO:0000312" key="12">
    <source>
        <dbReference type="EMBL" id="BAC28260.1"/>
    </source>
</evidence>
<evidence type="ECO:0000312" key="13">
    <source>
        <dbReference type="EMBL" id="CAA57689.1"/>
    </source>
</evidence>
<evidence type="ECO:0000312" key="14">
    <source>
        <dbReference type="EMBL" id="CAA84529.1"/>
    </source>
</evidence>
<evidence type="ECO:0000312" key="15">
    <source>
        <dbReference type="MGI" id="MGI:104688"/>
    </source>
</evidence>
<evidence type="ECO:0000312" key="16">
    <source>
        <dbReference type="PIR" id="I48302"/>
    </source>
</evidence>
<keyword id="KW-0084">Basement membrane</keyword>
<keyword id="KW-0130">Cell adhesion</keyword>
<keyword id="KW-0176">Collagen</keyword>
<keyword id="KW-1015">Disulfide bond</keyword>
<keyword id="KW-0272">Extracellular matrix</keyword>
<keyword id="KW-0325">Glycoprotein</keyword>
<keyword id="KW-0597">Phosphoprotein</keyword>
<keyword id="KW-1185">Reference proteome</keyword>
<keyword id="KW-0677">Repeat</keyword>
<keyword id="KW-0964">Secreted</keyword>
<keyword id="KW-0732">Signal</keyword>
<accession>Q9QZS0</accession>
<accession>Q61430</accession>
<accession>Q61435</accession>
<accession>Q8CCD6</accession>
<feature type="signal peptide" evidence="3">
    <location>
        <begin position="1"/>
        <end position="28"/>
    </location>
</feature>
<feature type="chain" id="PRO_0000279698" description="Collagen alpha-3(IV) chain" evidence="3">
    <location>
        <begin position="29"/>
        <end position="1669"/>
    </location>
</feature>
<feature type="chain" id="PRO_0000279699" description="Tumstatin" evidence="8">
    <location>
        <begin position="1424"/>
        <end position="1669"/>
    </location>
</feature>
<feature type="domain" description="Collagen IV NC1" evidence="4">
    <location>
        <begin position="1444"/>
        <end position="1668"/>
    </location>
</feature>
<feature type="region of interest" description="7S domain" evidence="2">
    <location>
        <begin position="29"/>
        <end position="42"/>
    </location>
</feature>
<feature type="region of interest" description="Triple-helical region">
    <location>
        <begin position="43"/>
        <end position="1436"/>
    </location>
</feature>
<feature type="region of interest" description="Disordered" evidence="5">
    <location>
        <begin position="44"/>
        <end position="473"/>
    </location>
</feature>
<feature type="region of interest" description="Disordered" evidence="5">
    <location>
        <begin position="500"/>
        <end position="1439"/>
    </location>
</feature>
<feature type="region of interest" description="Epitope recognized by Goodpasture antibodies" evidence="2">
    <location>
        <begin position="1425"/>
        <end position="1443"/>
    </location>
</feature>
<feature type="region of interest" description="Required for the anti-angiogenic activity of tumstatin" evidence="2">
    <location>
        <begin position="1478"/>
        <end position="1556"/>
    </location>
</feature>
<feature type="region of interest" description="Required for the anti-tumor cell activity of tumstatin" evidence="2">
    <location>
        <begin position="1609"/>
        <end position="1627"/>
    </location>
</feature>
<feature type="short sequence motif" description="Cell attachment site" evidence="3">
    <location>
        <begin position="830"/>
        <end position="832"/>
    </location>
</feature>
<feature type="short sequence motif" description="Cell attachment site" evidence="3">
    <location>
        <begin position="994"/>
        <end position="996"/>
    </location>
</feature>
<feature type="short sequence motif" description="Cell attachment site" evidence="3">
    <location>
        <begin position="1152"/>
        <end position="1154"/>
    </location>
</feature>
<feature type="short sequence motif" description="Cell attachment site" evidence="3">
    <location>
        <begin position="1304"/>
        <end position="1306"/>
    </location>
</feature>
<feature type="compositionally biased region" description="Low complexity" evidence="5">
    <location>
        <begin position="54"/>
        <end position="68"/>
    </location>
</feature>
<feature type="compositionally biased region" description="Pro residues" evidence="5">
    <location>
        <begin position="105"/>
        <end position="114"/>
    </location>
</feature>
<feature type="compositionally biased region" description="Pro residues" evidence="5">
    <location>
        <begin position="188"/>
        <end position="200"/>
    </location>
</feature>
<feature type="compositionally biased region" description="Low complexity" evidence="5">
    <location>
        <begin position="202"/>
        <end position="211"/>
    </location>
</feature>
<feature type="compositionally biased region" description="Basic and acidic residues" evidence="5">
    <location>
        <begin position="255"/>
        <end position="269"/>
    </location>
</feature>
<feature type="compositionally biased region" description="Low complexity" evidence="5">
    <location>
        <begin position="279"/>
        <end position="290"/>
    </location>
</feature>
<feature type="compositionally biased region" description="Low complexity" evidence="5">
    <location>
        <begin position="382"/>
        <end position="393"/>
    </location>
</feature>
<feature type="compositionally biased region" description="Pro residues" evidence="5">
    <location>
        <begin position="416"/>
        <end position="437"/>
    </location>
</feature>
<feature type="compositionally biased region" description="Low complexity" evidence="5">
    <location>
        <begin position="551"/>
        <end position="560"/>
    </location>
</feature>
<feature type="compositionally biased region" description="Pro residues" evidence="5">
    <location>
        <begin position="596"/>
        <end position="617"/>
    </location>
</feature>
<feature type="compositionally biased region" description="Pro residues" evidence="5">
    <location>
        <begin position="654"/>
        <end position="665"/>
    </location>
</feature>
<feature type="compositionally biased region" description="Low complexity" evidence="5">
    <location>
        <begin position="666"/>
        <end position="684"/>
    </location>
</feature>
<feature type="compositionally biased region" description="Gly residues" evidence="5">
    <location>
        <begin position="778"/>
        <end position="787"/>
    </location>
</feature>
<feature type="compositionally biased region" description="Low complexity" evidence="5">
    <location>
        <begin position="861"/>
        <end position="876"/>
    </location>
</feature>
<feature type="compositionally biased region" description="Basic and acidic residues" evidence="5">
    <location>
        <begin position="922"/>
        <end position="939"/>
    </location>
</feature>
<feature type="compositionally biased region" description="Low complexity" evidence="5">
    <location>
        <begin position="970"/>
        <end position="985"/>
    </location>
</feature>
<feature type="compositionally biased region" description="Low complexity" evidence="5">
    <location>
        <begin position="1092"/>
        <end position="1103"/>
    </location>
</feature>
<feature type="compositionally biased region" description="Pro residues" evidence="5">
    <location>
        <begin position="1128"/>
        <end position="1146"/>
    </location>
</feature>
<feature type="compositionally biased region" description="Low complexity" evidence="5">
    <location>
        <begin position="1228"/>
        <end position="1248"/>
    </location>
</feature>
<feature type="compositionally biased region" description="Pro residues" evidence="5">
    <location>
        <begin position="1250"/>
        <end position="1259"/>
    </location>
</feature>
<feature type="compositionally biased region" description="Pro residues" evidence="5">
    <location>
        <begin position="1333"/>
        <end position="1343"/>
    </location>
</feature>
<feature type="compositionally biased region" description="Low complexity" evidence="5">
    <location>
        <begin position="1366"/>
        <end position="1379"/>
    </location>
</feature>
<feature type="compositionally biased region" description="Low complexity" evidence="5">
    <location>
        <begin position="1402"/>
        <end position="1429"/>
    </location>
</feature>
<feature type="site" description="Cleavage; by collagenase" evidence="1">
    <location>
        <begin position="1424"/>
        <end position="1425"/>
    </location>
</feature>
<feature type="glycosylation site" description="N-linked (GlcNAc...) asparagine" evidence="3">
    <location>
        <position position="126"/>
    </location>
</feature>
<feature type="glycosylation site" description="N-linked (GlcNAc...) asparagine" evidence="3">
    <location>
        <position position="253"/>
    </location>
</feature>
<feature type="disulfide bond" description="Or C-1459 with C-1547" evidence="2 4">
    <location>
        <begin position="1459"/>
        <end position="1550"/>
    </location>
</feature>
<feature type="disulfide bond" description="Or C-1492 with C-1550" evidence="2 4">
    <location>
        <begin position="1492"/>
        <end position="1547"/>
    </location>
</feature>
<feature type="disulfide bond" evidence="2 4">
    <location>
        <begin position="1504"/>
        <end position="1510"/>
    </location>
</feature>
<feature type="disulfide bond" description="Or C-1569 with C-1661" evidence="2 4">
    <location>
        <begin position="1569"/>
        <end position="1664"/>
    </location>
</feature>
<feature type="disulfide bond" description="Or C-1603 with C-1664" evidence="2 4">
    <location>
        <begin position="1603"/>
        <end position="1661"/>
    </location>
</feature>
<feature type="disulfide bond" evidence="2 4">
    <location>
        <begin position="1615"/>
        <end position="1621"/>
    </location>
</feature>
<feature type="cross-link" description="S-Lysyl-methionine sulfilimine (Met-Lys) (interchain with K-1650)" evidence="1">
    <location>
        <position position="1532"/>
    </location>
</feature>
<feature type="cross-link" description="S-Lysyl-methionine sulfilimine (Lys-Met) (interchain with M-1532)" evidence="1">
    <location>
        <position position="1650"/>
    </location>
</feature>
<feature type="sequence conflict" description="In Ref. 1; AAD50449." evidence="10" ref="1">
    <original>L</original>
    <variation>R</variation>
    <location>
        <position position="1041"/>
    </location>
</feature>
<feature type="sequence conflict" description="In Ref. 3; CAA57689." evidence="10" ref="3">
    <original>G</original>
    <variation>R</variation>
    <location>
        <position position="1594"/>
    </location>
</feature>
<protein>
    <recommendedName>
        <fullName>Collagen alpha-3(IV) chain</fullName>
    </recommendedName>
    <component>
        <recommendedName>
            <fullName>Tumstatin</fullName>
        </recommendedName>
    </component>
</protein>
<reference evidence="11" key="1">
    <citation type="journal article" date="1999" name="Genomics">
        <title>Insertional mutation of the collagen genes Col4a3 and Col4a4 in a mouse model of Alport syndrome.</title>
        <authorList>
            <person name="Lu W."/>
            <person name="Phillips C.L."/>
            <person name="Killen P.D."/>
            <person name="Hlaing T."/>
            <person name="Harrison W.R."/>
            <person name="Elder F.F.B."/>
            <person name="Miner J.H."/>
            <person name="Overbeek P.A."/>
            <person name="Meisler M.H."/>
        </authorList>
    </citation>
    <scope>NUCLEOTIDE SEQUENCE [MRNA]</scope>
    <source>
        <tissue evidence="11">Embryonic kidney</tissue>
    </source>
</reference>
<reference key="2">
    <citation type="journal article" date="2009" name="PLoS Biol.">
        <title>Lineage-specific biology revealed by a finished genome assembly of the mouse.</title>
        <authorList>
            <person name="Church D.M."/>
            <person name="Goodstadt L."/>
            <person name="Hillier L.W."/>
            <person name="Zody M.C."/>
            <person name="Goldstein S."/>
            <person name="She X."/>
            <person name="Bult C.J."/>
            <person name="Agarwala R."/>
            <person name="Cherry J.L."/>
            <person name="DiCuccio M."/>
            <person name="Hlavina W."/>
            <person name="Kapustin Y."/>
            <person name="Meric P."/>
            <person name="Maglott D."/>
            <person name="Birtle Z."/>
            <person name="Marques A.C."/>
            <person name="Graves T."/>
            <person name="Zhou S."/>
            <person name="Teague B."/>
            <person name="Potamousis K."/>
            <person name="Churas C."/>
            <person name="Place M."/>
            <person name="Herschleb J."/>
            <person name="Runnheim R."/>
            <person name="Forrest D."/>
            <person name="Amos-Landgraf J."/>
            <person name="Schwartz D.C."/>
            <person name="Cheng Z."/>
            <person name="Lindblad-Toh K."/>
            <person name="Eichler E.E."/>
            <person name="Ponting C.P."/>
        </authorList>
    </citation>
    <scope>NUCLEOTIDE SEQUENCE [LARGE SCALE GENOMIC DNA]</scope>
    <source>
        <strain>C57BL/6J</strain>
    </source>
</reference>
<reference evidence="10 14 16" key="3">
    <citation type="journal article" date="1994" name="J. Cell Biol.">
        <title>Collagen IV alpha 3, alpha 4, and alpha 5 chains in rodent basal laminae: sequence, distribution, association with laminins, and developmental switches.</title>
        <authorList>
            <person name="Miner J.H."/>
            <person name="Sanes J.R."/>
        </authorList>
    </citation>
    <scope>NUCLEOTIDE SEQUENCE [MRNA] OF 1424-1669</scope>
    <scope>FUNCTION</scope>
    <scope>INTERACTION WITH LAMB2</scope>
    <scope>SUBCELLULAR LOCATION</scope>
    <scope>TISSUE SPECIFICITY</scope>
    <source>
        <strain evidence="14">BALB/cJ</strain>
        <tissue evidence="14">Kidney</tissue>
    </source>
</reference>
<reference evidence="10 13" key="4">
    <citation type="submission" date="1994-10" db="EMBL/GenBank/DDBJ databases">
        <title>Cloning of the NC1 domains fo the minor collagen IV chains of mouse via PCR (RACE) reveals the presence of the mRNAs for alpha3 (IV) and alpha5 (IV) in differentiated teratocarcinoma cells.</title>
        <authorList>
            <person name="Oberbaeumer I."/>
        </authorList>
    </citation>
    <scope>NUCLEOTIDE SEQUENCE [MRNA] OF 1491-1651</scope>
    <source>
        <strain evidence="13">129</strain>
        <tissue evidence="13">Epithelium</tissue>
    </source>
</reference>
<reference evidence="10 12" key="5">
    <citation type="journal article" date="2005" name="Science">
        <title>The transcriptional landscape of the mammalian genome.</title>
        <authorList>
            <person name="Carninci P."/>
            <person name="Kasukawa T."/>
            <person name="Katayama S."/>
            <person name="Gough J."/>
            <person name="Frith M.C."/>
            <person name="Maeda N."/>
            <person name="Oyama R."/>
            <person name="Ravasi T."/>
            <person name="Lenhard B."/>
            <person name="Wells C."/>
            <person name="Kodzius R."/>
            <person name="Shimokawa K."/>
            <person name="Bajic V.B."/>
            <person name="Brenner S.E."/>
            <person name="Batalov S."/>
            <person name="Forrest A.R."/>
            <person name="Zavolan M."/>
            <person name="Davis M.J."/>
            <person name="Wilming L.G."/>
            <person name="Aidinis V."/>
            <person name="Allen J.E."/>
            <person name="Ambesi-Impiombato A."/>
            <person name="Apweiler R."/>
            <person name="Aturaliya R.N."/>
            <person name="Bailey T.L."/>
            <person name="Bansal M."/>
            <person name="Baxter L."/>
            <person name="Beisel K.W."/>
            <person name="Bersano T."/>
            <person name="Bono H."/>
            <person name="Chalk A.M."/>
            <person name="Chiu K.P."/>
            <person name="Choudhary V."/>
            <person name="Christoffels A."/>
            <person name="Clutterbuck D.R."/>
            <person name="Crowe M.L."/>
            <person name="Dalla E."/>
            <person name="Dalrymple B.P."/>
            <person name="de Bono B."/>
            <person name="Della Gatta G."/>
            <person name="di Bernardo D."/>
            <person name="Down T."/>
            <person name="Engstrom P."/>
            <person name="Fagiolini M."/>
            <person name="Faulkner G."/>
            <person name="Fletcher C.F."/>
            <person name="Fukushima T."/>
            <person name="Furuno M."/>
            <person name="Futaki S."/>
            <person name="Gariboldi M."/>
            <person name="Georgii-Hemming P."/>
            <person name="Gingeras T.R."/>
            <person name="Gojobori T."/>
            <person name="Green R.E."/>
            <person name="Gustincich S."/>
            <person name="Harbers M."/>
            <person name="Hayashi Y."/>
            <person name="Hensch T.K."/>
            <person name="Hirokawa N."/>
            <person name="Hill D."/>
            <person name="Huminiecki L."/>
            <person name="Iacono M."/>
            <person name="Ikeo K."/>
            <person name="Iwama A."/>
            <person name="Ishikawa T."/>
            <person name="Jakt M."/>
            <person name="Kanapin A."/>
            <person name="Katoh M."/>
            <person name="Kawasawa Y."/>
            <person name="Kelso J."/>
            <person name="Kitamura H."/>
            <person name="Kitano H."/>
            <person name="Kollias G."/>
            <person name="Krishnan S.P."/>
            <person name="Kruger A."/>
            <person name="Kummerfeld S.K."/>
            <person name="Kurochkin I.V."/>
            <person name="Lareau L.F."/>
            <person name="Lazarevic D."/>
            <person name="Lipovich L."/>
            <person name="Liu J."/>
            <person name="Liuni S."/>
            <person name="McWilliam S."/>
            <person name="Madan Babu M."/>
            <person name="Madera M."/>
            <person name="Marchionni L."/>
            <person name="Matsuda H."/>
            <person name="Matsuzawa S."/>
            <person name="Miki H."/>
            <person name="Mignone F."/>
            <person name="Miyake S."/>
            <person name="Morris K."/>
            <person name="Mottagui-Tabar S."/>
            <person name="Mulder N."/>
            <person name="Nakano N."/>
            <person name="Nakauchi H."/>
            <person name="Ng P."/>
            <person name="Nilsson R."/>
            <person name="Nishiguchi S."/>
            <person name="Nishikawa S."/>
            <person name="Nori F."/>
            <person name="Ohara O."/>
            <person name="Okazaki Y."/>
            <person name="Orlando V."/>
            <person name="Pang K.C."/>
            <person name="Pavan W.J."/>
            <person name="Pavesi G."/>
            <person name="Pesole G."/>
            <person name="Petrovsky N."/>
            <person name="Piazza S."/>
            <person name="Reed J."/>
            <person name="Reid J.F."/>
            <person name="Ring B.Z."/>
            <person name="Ringwald M."/>
            <person name="Rost B."/>
            <person name="Ruan Y."/>
            <person name="Salzberg S.L."/>
            <person name="Sandelin A."/>
            <person name="Schneider C."/>
            <person name="Schoenbach C."/>
            <person name="Sekiguchi K."/>
            <person name="Semple C.A."/>
            <person name="Seno S."/>
            <person name="Sessa L."/>
            <person name="Sheng Y."/>
            <person name="Shibata Y."/>
            <person name="Shimada H."/>
            <person name="Shimada K."/>
            <person name="Silva D."/>
            <person name="Sinclair B."/>
            <person name="Sperling S."/>
            <person name="Stupka E."/>
            <person name="Sugiura K."/>
            <person name="Sultana R."/>
            <person name="Takenaka Y."/>
            <person name="Taki K."/>
            <person name="Tammoja K."/>
            <person name="Tan S.L."/>
            <person name="Tang S."/>
            <person name="Taylor M.S."/>
            <person name="Tegner J."/>
            <person name="Teichmann S.A."/>
            <person name="Ueda H.R."/>
            <person name="van Nimwegen E."/>
            <person name="Verardo R."/>
            <person name="Wei C.L."/>
            <person name="Yagi K."/>
            <person name="Yamanishi H."/>
            <person name="Zabarovsky E."/>
            <person name="Zhu S."/>
            <person name="Zimmer A."/>
            <person name="Hide W."/>
            <person name="Bult C."/>
            <person name="Grimmond S.M."/>
            <person name="Teasdale R.D."/>
            <person name="Liu E.T."/>
            <person name="Brusic V."/>
            <person name="Quackenbush J."/>
            <person name="Wahlestedt C."/>
            <person name="Mattick J.S."/>
            <person name="Hume D.A."/>
            <person name="Kai C."/>
            <person name="Sasaki D."/>
            <person name="Tomaru Y."/>
            <person name="Fukuda S."/>
            <person name="Kanamori-Katayama M."/>
            <person name="Suzuki M."/>
            <person name="Aoki J."/>
            <person name="Arakawa T."/>
            <person name="Iida J."/>
            <person name="Imamura K."/>
            <person name="Itoh M."/>
            <person name="Kato T."/>
            <person name="Kawaji H."/>
            <person name="Kawagashira N."/>
            <person name="Kawashima T."/>
            <person name="Kojima M."/>
            <person name="Kondo S."/>
            <person name="Konno H."/>
            <person name="Nakano K."/>
            <person name="Ninomiya N."/>
            <person name="Nishio T."/>
            <person name="Okada M."/>
            <person name="Plessy C."/>
            <person name="Shibata K."/>
            <person name="Shiraki T."/>
            <person name="Suzuki S."/>
            <person name="Tagami M."/>
            <person name="Waki K."/>
            <person name="Watahiki A."/>
            <person name="Okamura-Oho Y."/>
            <person name="Suzuki H."/>
            <person name="Kawai J."/>
            <person name="Hayashizaki Y."/>
        </authorList>
    </citation>
    <scope>NUCLEOTIDE SEQUENCE [LARGE SCALE MRNA] OF 1558-1669</scope>
    <source>
        <strain evidence="12">C57BL/6J</strain>
        <tissue evidence="12">Embryonic lung</tissue>
    </source>
</reference>
<reference evidence="10" key="6">
    <citation type="journal article" date="1996" name="Genes Dev.">
        <title>Collagen COL4A3 knockout: a mouse model for autosomal Alport syndrome.</title>
        <authorList>
            <person name="Cosgrove D."/>
            <person name="Meehan D.T."/>
            <person name="Grunkemeyer J.A."/>
            <person name="Kornak J.M."/>
            <person name="Sayers R."/>
            <person name="Hunter W.J."/>
            <person name="Samuelson G.C."/>
        </authorList>
    </citation>
    <scope>DISRUPTION PHENOTYPE</scope>
</reference>
<reference evidence="10" key="7">
    <citation type="journal article" date="2003" name="Cancer Cell">
        <title>Physiological levels of tumstatin, a fragment of collagen IV alpha3 chain, are generated by MMP-9 proteolysis and suppress angiogenesis via alphaV beta3 integrin.</title>
        <authorList>
            <person name="Hamano Y."/>
            <person name="Zeisberg M."/>
            <person name="Sugimoto H."/>
            <person name="Lively J.C."/>
            <person name="Maeshima Y."/>
            <person name="Yang C."/>
            <person name="Hynes R.O."/>
            <person name="Werb Z."/>
            <person name="Sudhakar A."/>
            <person name="Kalluri R."/>
        </authorList>
    </citation>
    <scope>FUNCTION</scope>
</reference>
<reference evidence="10" key="8">
    <citation type="journal article" date="2003" name="Kidney Int.">
        <title>Characterization of assembly of recombinant type IV collagen alpha3, alpha4, and alpha5 chains in transfected cell strains.</title>
        <authorList>
            <person name="Kobayashi T."/>
            <person name="Uchiyama M."/>
        </authorList>
    </citation>
    <scope>IDENTIFICATION IN A COMPLEX WITH COL4A4 AND COL4A5</scope>
</reference>
<reference evidence="10" key="9">
    <citation type="journal article" date="2006" name="FASEB J.">
        <title>Tumor-specific expression of the RGD-alpha3(IV)NC1 domain suppresses endothelial tube formation and tumor growth in mice.</title>
        <authorList>
            <person name="Miyoshi T."/>
            <person name="Hirohata S."/>
            <person name="Ogawa H."/>
            <person name="Doi M."/>
            <person name="Obika M."/>
            <person name="Yonezawa T."/>
            <person name="Sado Y."/>
            <person name="Kusachi S."/>
            <person name="Kyo S."/>
            <person name="Kondo S."/>
            <person name="Shiratori Y."/>
            <person name="Hudson B.G."/>
            <person name="Ninomiya Y."/>
        </authorList>
    </citation>
    <scope>FUNCTION</scope>
</reference>
<comment type="function">
    <text evidence="2 8">Type IV collagen is the major structural component of glomerular basement membranes (GBM), forming a 'chicken-wire' meshwork together with laminins, proteoglycans and entactin/nidogen.</text>
</comment>
<comment type="function">
    <text evidence="2 6 8">Tumstatin, a cleavage fragment corresponding to the collagen alpha 3(IV) NC1 domain, possesses both anti-angiogenic and anti-tumor cell activity; these two anti-tumor properties may be regulated via RGD-independent ITGB3-mediated mechanisms.</text>
</comment>
<comment type="subunit">
    <text evidence="2 7 8">There are six type IV collagen isoforms, alpha 1(IV)-alpha 6(IV), each of which can form a triple helix structure with 2 other chains to generate type IV collagen network. The alpha 3(IV) chain forms a triple helical protomer with alpha 4(IV) and alpha 5(IV); this triple helical structure dimerizes through NC1-NC1 domain interactions such that the alpha 3(IV), alpha 4(IV) and alpha 5(IV) chains of one protomer connect with the alpha 5(IV), alpha 4(IV) and alpha 3(IV) chains of the opposite promoter, respectively (PubMed:14633121). Interacts with ITGB3 (By similarity). Associates with LAMB2 at the neuromuscular junction and in GBM (PubMed:7962065).</text>
</comment>
<comment type="subcellular location">
    <subcellularLocation>
        <location evidence="4 8">Secreted</location>
        <location evidence="4 8">Extracellular space</location>
        <location evidence="4 8">Extracellular matrix</location>
        <location evidence="4 8">Basement membrane</location>
    </subcellularLocation>
    <text evidence="2 8">Colocalizes with COL4A4 and COL4A5 in GBM, tubular basement membrane (TBM) and synaptic basal lamina (BL).</text>
</comment>
<comment type="tissue specificity">
    <text evidence="8">Highly expressed in kidney and lung. Detected at lower levels in heart, muscle and skin.</text>
</comment>
<comment type="domain">
    <text evidence="2 4">Alpha chains of type IV collagen have a non-collagenous domain (NC1) at their C-terminus, frequent interruptions of the G-X-Y repeats in the long central triple-helical domain (which may cause flexibility in the triple helix), and a short N-terminal triple-helical 7S domain.</text>
</comment>
<comment type="PTM">
    <text evidence="2 4">Prolines at the third position of the tripeptide repeating unit (G-X-Y) are hydroxylated in some or all of the chains.</text>
</comment>
<comment type="PTM">
    <text evidence="2 4">Type IV collagens contain numerous cysteine residues which are involved in inter- and intramolecular disulfide bonding. 12 of these, located in the NC1 domain, are conserved in all known type IV collagens.</text>
</comment>
<comment type="PTM">
    <text evidence="1">The trimeric structure of the NC1 domains is stabilized by covalent bonds between Lys and Met residues.</text>
</comment>
<comment type="PTM">
    <text evidence="2">Phosphorylated. Thought to be phosphorylated by CERT, but CERT does not have kinase activity.</text>
</comment>
<comment type="disruption phenotype">
    <text evidence="9">Mice exhibit normal pregnancy and wound healing, but consistent with the human hereditary disorder Alport syndrome they develop a progressive glomerulonephritis with microhematuria and proteinuria.</text>
</comment>
<comment type="similarity">
    <text evidence="4">Belongs to the type IV collagen family.</text>
</comment>
<name>CO4A3_MOUSE</name>
<organism>
    <name type="scientific">Mus musculus</name>
    <name type="common">Mouse</name>
    <dbReference type="NCBI Taxonomy" id="10090"/>
    <lineage>
        <taxon>Eukaryota</taxon>
        <taxon>Metazoa</taxon>
        <taxon>Chordata</taxon>
        <taxon>Craniata</taxon>
        <taxon>Vertebrata</taxon>
        <taxon>Euteleostomi</taxon>
        <taxon>Mammalia</taxon>
        <taxon>Eutheria</taxon>
        <taxon>Euarchontoglires</taxon>
        <taxon>Glires</taxon>
        <taxon>Rodentia</taxon>
        <taxon>Myomorpha</taxon>
        <taxon>Muroidea</taxon>
        <taxon>Muridae</taxon>
        <taxon>Murinae</taxon>
        <taxon>Mus</taxon>
        <taxon>Mus</taxon>
    </lineage>
</organism>
<sequence length="1669" mass="161726">MHSKTAPRFLVFLLLTLLLLLAASPVASKGCVCKGKGQCLCAGTKGEKGEKGVPGSPGFPGQKGFPGPEGLPGPQGPKGSPGLPGLTGPKGIRGITGLPGFAGPPGLPGLPGHPGPRGLAGLPGCNGSKGEQGFPGFPGTPGYAGLPGPDGLKGQKGEPAQGEDRGFNGKGDPGPPGVPGFQGFPGLPGFPGPAGPPGPPGFFGLPGAMGPRGPKGHMGDSVIGQKGERGMKGLTGPPGPPGTVIFTLTQPYNKSDFKGEKGDEGERGEPGPPGPSGPPGDSYGSEKGAPGEPGPRGKPGKDGAPGFPGTEGAKGNRGFPGLRGEAGIKGRKGDIGPPGFPGPTEYYDAYLEKGERGMPGLPGPKGARGPQGPSGPPGVPGSPGLSRPGLRGPIGWPGLKGSKGERGPPGKDTVGPPGPLGCPGSPGPPGPPGPPGCPGDIVFKCSPGEHGMPGDTGPPGVPGLDGPKGEPGSPCTECHCFPGPPGVPGFPGLDGIKGIPGGRGVPGLKGNPGSPGSAGLPGFAGFPGDQGHPGLKGDKGDTPLPWGQVGNPGDPGLRGLPGRKGFDGTPGGPGAKGPPGPQGEPALSGRKGDQGPPGPPGFPGPPGPAGPAGPPGYGPQGEPGPKGAQGVPGVLGPPGEAGLKGEPSTSTPDLGPPGPPGPPGQAGPRGLPGLPGPVGKCDPGLPGPDGEPGIPEAGCPGPPGPKGNQGFPGTKGSPGCPGEMGKPGRPGEPGIPGAKGEPSVGRPGKPGKPGFPGERGNAGENGDIGLPGLPGLPGTPGRGGLDGPPGDPGQPGSPGAKGSPGRCIPGPRGTQGLPGLNGLKGQPGRRGDTGPKGDPGIPGMDRSGVPGDPGPPGTPGCPGEMGPPGQKGYPGAPGFPGPPGEKGEVGMMGYPGTTGPPGLPGKPGSQGQRGSLGIPGMKGEKGRPGAKGERGEKGKPGPSQTTLLKGDKGEPGLKGFVGNPGEKGNRGNPGLPGPKGLEGLPGLPGPPGPRGDTGSRGNPGRPGPHGMPGSMGIMGVPGPKGRKGTSGLPGLAGRPGLTGIHGPQGDKGEPGYSEGARPGPPGPKGDPGLPGDKGKKGERGVPGPPGQSGPAGPDGAPGSPGSPGHPGKPGPAGDLGLKGQKGFPGPPGSTGPPGPPGLPGLPGPMGMRGDQGRDGIPGPPGEKGETGLLGAYPGPKGSPGVPGAKGDRGVPGLSGLPGRKGVMGDVGPQGPPGTAGLPGPPGLPGAIIPGPKGDRGLPGLRGNPGEPGPPGPPGPIGKGIKGDKGFMGPPGPKGLPGTVGDMGPPGFPGAPGTPGLPGVRGDPGFPGFPGIKGEKGNPGFLGPIGHPGPVGPKGPPGPRGKPGTLKVISLPGSPGPPGVPGQPGMKGDPGPLGLPGIPGPCGPRGKPGKDGKPGTPGPAGTKGNKGLKGQQGPPGLDGLPGLKGNPGDRGTPATGTRMRGFIFTRHSQTTAIPSCPEGTQPLYSGFSLLFVQGNKRAHGQDLGTLGSCLQRFTTMPFLFCNINNVCNFASRNDYSYWLSTPALMPMDMAPISGRALEPYISRCTVCEGPAMAIAVHSQTTAIPPCPQDWVSLWKGFSFIMFTSAGSEGAGQALASPGSCLEEFRASPFIECHGRGTCNYYSNSYSFWLASLNPERMFRKPIPSTVKAGDLEKIISRCQVCMKKRH</sequence>
<proteinExistence type="evidence at protein level"/>